<reference key="1">
    <citation type="journal article" date="1998" name="Science">
        <title>Complete genome sequence of Treponema pallidum, the syphilis spirochete.</title>
        <authorList>
            <person name="Fraser C.M."/>
            <person name="Norris S.J."/>
            <person name="Weinstock G.M."/>
            <person name="White O."/>
            <person name="Sutton G.G."/>
            <person name="Dodson R.J."/>
            <person name="Gwinn M.L."/>
            <person name="Hickey E.K."/>
            <person name="Clayton R.A."/>
            <person name="Ketchum K.A."/>
            <person name="Sodergren E."/>
            <person name="Hardham J.M."/>
            <person name="McLeod M.P."/>
            <person name="Salzberg S.L."/>
            <person name="Peterson J.D."/>
            <person name="Khalak H.G."/>
            <person name="Richardson D.L."/>
            <person name="Howell J.K."/>
            <person name="Chidambaram M."/>
            <person name="Utterback T.R."/>
            <person name="McDonald L.A."/>
            <person name="Artiach P."/>
            <person name="Bowman C."/>
            <person name="Cotton M.D."/>
            <person name="Fujii C."/>
            <person name="Garland S.A."/>
            <person name="Hatch B."/>
            <person name="Horst K."/>
            <person name="Roberts K.M."/>
            <person name="Sandusky M."/>
            <person name="Weidman J.F."/>
            <person name="Smith H.O."/>
            <person name="Venter J.C."/>
        </authorList>
    </citation>
    <scope>NUCLEOTIDE SEQUENCE [LARGE SCALE GENOMIC DNA]</scope>
    <source>
        <strain>Nichols</strain>
    </source>
</reference>
<dbReference type="EMBL" id="AE000520">
    <property type="protein sequence ID" value="AAC65693.1"/>
    <property type="molecule type" value="Genomic_DNA"/>
</dbReference>
<dbReference type="PIR" id="C71289">
    <property type="entry name" value="C71289"/>
</dbReference>
<dbReference type="RefSeq" id="WP_010882148.1">
    <property type="nucleotide sequence ID" value="NC_000919.1"/>
</dbReference>
<dbReference type="STRING" id="243276.TP_0703"/>
<dbReference type="EnsemblBacteria" id="AAC65693">
    <property type="protein sequence ID" value="AAC65693"/>
    <property type="gene ID" value="TP_0703"/>
</dbReference>
<dbReference type="KEGG" id="tpa:TP_0703"/>
<dbReference type="eggNOG" id="COG0739">
    <property type="taxonomic scope" value="Bacteria"/>
</dbReference>
<dbReference type="HOGENOM" id="CLU_1224300_0_0_12"/>
<dbReference type="Proteomes" id="UP000000811">
    <property type="component" value="Chromosome"/>
</dbReference>
<keyword id="KW-1185">Reference proteome</keyword>
<sequence>MGAERVGRAPGVNAKRAVQTQGVQSPSVKRSVRWVRGLCEVLLFSGVFVSAVSFLLHSAAVPPPERQVVPAHFERIAMQFPRQVSQGACAMATFSLVALQEKDKAHTEVHLVLRTPAGKEAKTVRAFALPPKGIAQLGTDAATAGVSRAGSQDVTHVALLGISIFWEPGDWMLEAQVRVPGGKPYVRRAPLRIEKKEFPREELRLDRKNTAIAQDKSERKKVQRDA</sequence>
<protein>
    <recommendedName>
        <fullName>Uncharacterized protein TP_0703</fullName>
    </recommendedName>
</protein>
<name>Y703_TREPA</name>
<proteinExistence type="predicted"/>
<gene>
    <name type="ordered locus">TP_0703</name>
</gene>
<feature type="chain" id="PRO_0000202307" description="Uncharacterized protein TP_0703">
    <location>
        <begin position="1"/>
        <end position="226"/>
    </location>
</feature>
<feature type="region of interest" description="Disordered" evidence="1">
    <location>
        <begin position="1"/>
        <end position="20"/>
    </location>
</feature>
<feature type="region of interest" description="Disordered" evidence="1">
    <location>
        <begin position="205"/>
        <end position="226"/>
    </location>
</feature>
<organism>
    <name type="scientific">Treponema pallidum (strain Nichols)</name>
    <dbReference type="NCBI Taxonomy" id="243276"/>
    <lineage>
        <taxon>Bacteria</taxon>
        <taxon>Pseudomonadati</taxon>
        <taxon>Spirochaetota</taxon>
        <taxon>Spirochaetia</taxon>
        <taxon>Spirochaetales</taxon>
        <taxon>Treponemataceae</taxon>
        <taxon>Treponema</taxon>
    </lineage>
</organism>
<evidence type="ECO:0000256" key="1">
    <source>
        <dbReference type="SAM" id="MobiDB-lite"/>
    </source>
</evidence>
<accession>O83701</accession>